<dbReference type="EC" id="6.3.4.2" evidence="1"/>
<dbReference type="EMBL" id="CP000088">
    <property type="protein sequence ID" value="AAZ55237.1"/>
    <property type="status" value="ALT_INIT"/>
    <property type="molecule type" value="Genomic_DNA"/>
</dbReference>
<dbReference type="RefSeq" id="WP_041427888.1">
    <property type="nucleotide sequence ID" value="NC_007333.1"/>
</dbReference>
<dbReference type="SMR" id="Q47QN2"/>
<dbReference type="STRING" id="269800.Tfu_1199"/>
<dbReference type="MEROPS" id="C26.964"/>
<dbReference type="KEGG" id="tfu:Tfu_1199"/>
<dbReference type="eggNOG" id="COG0504">
    <property type="taxonomic scope" value="Bacteria"/>
</dbReference>
<dbReference type="HOGENOM" id="CLU_011675_5_0_11"/>
<dbReference type="OrthoDB" id="9801107at2"/>
<dbReference type="UniPathway" id="UPA00159">
    <property type="reaction ID" value="UER00277"/>
</dbReference>
<dbReference type="GO" id="GO:0005829">
    <property type="term" value="C:cytosol"/>
    <property type="evidence" value="ECO:0007669"/>
    <property type="project" value="TreeGrafter"/>
</dbReference>
<dbReference type="GO" id="GO:0005524">
    <property type="term" value="F:ATP binding"/>
    <property type="evidence" value="ECO:0007669"/>
    <property type="project" value="UniProtKB-KW"/>
</dbReference>
<dbReference type="GO" id="GO:0003883">
    <property type="term" value="F:CTP synthase activity"/>
    <property type="evidence" value="ECO:0007669"/>
    <property type="project" value="UniProtKB-UniRule"/>
</dbReference>
<dbReference type="GO" id="GO:0004359">
    <property type="term" value="F:glutaminase activity"/>
    <property type="evidence" value="ECO:0007669"/>
    <property type="project" value="RHEA"/>
</dbReference>
<dbReference type="GO" id="GO:0042802">
    <property type="term" value="F:identical protein binding"/>
    <property type="evidence" value="ECO:0007669"/>
    <property type="project" value="TreeGrafter"/>
</dbReference>
<dbReference type="GO" id="GO:0046872">
    <property type="term" value="F:metal ion binding"/>
    <property type="evidence" value="ECO:0007669"/>
    <property type="project" value="UniProtKB-KW"/>
</dbReference>
<dbReference type="GO" id="GO:0044210">
    <property type="term" value="P:'de novo' CTP biosynthetic process"/>
    <property type="evidence" value="ECO:0007669"/>
    <property type="project" value="UniProtKB-UniRule"/>
</dbReference>
<dbReference type="GO" id="GO:0019856">
    <property type="term" value="P:pyrimidine nucleobase biosynthetic process"/>
    <property type="evidence" value="ECO:0007669"/>
    <property type="project" value="TreeGrafter"/>
</dbReference>
<dbReference type="CDD" id="cd03113">
    <property type="entry name" value="CTPS_N"/>
    <property type="match status" value="1"/>
</dbReference>
<dbReference type="CDD" id="cd01746">
    <property type="entry name" value="GATase1_CTP_Synthase"/>
    <property type="match status" value="1"/>
</dbReference>
<dbReference type="FunFam" id="3.40.50.300:FF:000009">
    <property type="entry name" value="CTP synthase"/>
    <property type="match status" value="1"/>
</dbReference>
<dbReference type="FunFam" id="3.40.50.880:FF:000002">
    <property type="entry name" value="CTP synthase"/>
    <property type="match status" value="1"/>
</dbReference>
<dbReference type="Gene3D" id="3.40.50.880">
    <property type="match status" value="1"/>
</dbReference>
<dbReference type="Gene3D" id="3.40.50.300">
    <property type="entry name" value="P-loop containing nucleotide triphosphate hydrolases"/>
    <property type="match status" value="1"/>
</dbReference>
<dbReference type="HAMAP" id="MF_01227">
    <property type="entry name" value="PyrG"/>
    <property type="match status" value="1"/>
</dbReference>
<dbReference type="InterPro" id="IPR029062">
    <property type="entry name" value="Class_I_gatase-like"/>
</dbReference>
<dbReference type="InterPro" id="IPR004468">
    <property type="entry name" value="CTP_synthase"/>
</dbReference>
<dbReference type="InterPro" id="IPR017456">
    <property type="entry name" value="CTP_synthase_N"/>
</dbReference>
<dbReference type="InterPro" id="IPR017926">
    <property type="entry name" value="GATASE"/>
</dbReference>
<dbReference type="InterPro" id="IPR033828">
    <property type="entry name" value="GATase1_CTP_Synthase"/>
</dbReference>
<dbReference type="InterPro" id="IPR027417">
    <property type="entry name" value="P-loop_NTPase"/>
</dbReference>
<dbReference type="NCBIfam" id="NF003792">
    <property type="entry name" value="PRK05380.1"/>
    <property type="match status" value="1"/>
</dbReference>
<dbReference type="NCBIfam" id="TIGR00337">
    <property type="entry name" value="PyrG"/>
    <property type="match status" value="1"/>
</dbReference>
<dbReference type="PANTHER" id="PTHR11550">
    <property type="entry name" value="CTP SYNTHASE"/>
    <property type="match status" value="1"/>
</dbReference>
<dbReference type="PANTHER" id="PTHR11550:SF0">
    <property type="entry name" value="CTP SYNTHASE-RELATED"/>
    <property type="match status" value="1"/>
</dbReference>
<dbReference type="Pfam" id="PF06418">
    <property type="entry name" value="CTP_synth_N"/>
    <property type="match status" value="1"/>
</dbReference>
<dbReference type="Pfam" id="PF00117">
    <property type="entry name" value="GATase"/>
    <property type="match status" value="1"/>
</dbReference>
<dbReference type="SUPFAM" id="SSF52317">
    <property type="entry name" value="Class I glutamine amidotransferase-like"/>
    <property type="match status" value="1"/>
</dbReference>
<dbReference type="SUPFAM" id="SSF52540">
    <property type="entry name" value="P-loop containing nucleoside triphosphate hydrolases"/>
    <property type="match status" value="1"/>
</dbReference>
<dbReference type="PROSITE" id="PS51273">
    <property type="entry name" value="GATASE_TYPE_1"/>
    <property type="match status" value="1"/>
</dbReference>
<reference key="1">
    <citation type="journal article" date="2007" name="J. Bacteriol.">
        <title>Genome sequence and analysis of the soil cellulolytic actinomycete Thermobifida fusca YX.</title>
        <authorList>
            <person name="Lykidis A."/>
            <person name="Mavromatis K."/>
            <person name="Ivanova N."/>
            <person name="Anderson I."/>
            <person name="Land M."/>
            <person name="DiBartolo G."/>
            <person name="Martinez M."/>
            <person name="Lapidus A."/>
            <person name="Lucas S."/>
            <person name="Copeland A."/>
            <person name="Richardson P."/>
            <person name="Wilson D.B."/>
            <person name="Kyrpides N."/>
        </authorList>
    </citation>
    <scope>NUCLEOTIDE SEQUENCE [LARGE SCALE GENOMIC DNA]</scope>
    <source>
        <strain>YX</strain>
    </source>
</reference>
<organism>
    <name type="scientific">Thermobifida fusca (strain YX)</name>
    <dbReference type="NCBI Taxonomy" id="269800"/>
    <lineage>
        <taxon>Bacteria</taxon>
        <taxon>Bacillati</taxon>
        <taxon>Actinomycetota</taxon>
        <taxon>Actinomycetes</taxon>
        <taxon>Streptosporangiales</taxon>
        <taxon>Nocardiopsidaceae</taxon>
        <taxon>Thermobifida</taxon>
    </lineage>
</organism>
<evidence type="ECO:0000255" key="1">
    <source>
        <dbReference type="HAMAP-Rule" id="MF_01227"/>
    </source>
</evidence>
<evidence type="ECO:0000305" key="2"/>
<name>PYRG_THEFY</name>
<protein>
    <recommendedName>
        <fullName evidence="1">CTP synthase</fullName>
        <ecNumber evidence="1">6.3.4.2</ecNumber>
    </recommendedName>
    <alternativeName>
        <fullName evidence="1">Cytidine 5'-triphosphate synthase</fullName>
    </alternativeName>
    <alternativeName>
        <fullName evidence="1">Cytidine triphosphate synthetase</fullName>
        <shortName evidence="1">CTP synthetase</shortName>
        <shortName evidence="1">CTPS</shortName>
    </alternativeName>
    <alternativeName>
        <fullName evidence="1">UTP--ammonia ligase</fullName>
    </alternativeName>
</protein>
<keyword id="KW-0067">ATP-binding</keyword>
<keyword id="KW-0315">Glutamine amidotransferase</keyword>
<keyword id="KW-0436">Ligase</keyword>
<keyword id="KW-0460">Magnesium</keyword>
<keyword id="KW-0479">Metal-binding</keyword>
<keyword id="KW-0547">Nucleotide-binding</keyword>
<keyword id="KW-0665">Pyrimidine biosynthesis</keyword>
<feature type="chain" id="PRO_0000266249" description="CTP synthase">
    <location>
        <begin position="1"/>
        <end position="552"/>
    </location>
</feature>
<feature type="domain" description="Glutamine amidotransferase type-1" evidence="1">
    <location>
        <begin position="296"/>
        <end position="546"/>
    </location>
</feature>
<feature type="region of interest" description="Amidoligase domain" evidence="1">
    <location>
        <begin position="1"/>
        <end position="271"/>
    </location>
</feature>
<feature type="active site" description="Nucleophile; for glutamine hydrolysis" evidence="1">
    <location>
        <position position="386"/>
    </location>
</feature>
<feature type="active site" evidence="1">
    <location>
        <position position="519"/>
    </location>
</feature>
<feature type="active site" evidence="1">
    <location>
        <position position="521"/>
    </location>
</feature>
<feature type="binding site" evidence="1">
    <location>
        <position position="18"/>
    </location>
    <ligand>
        <name>CTP</name>
        <dbReference type="ChEBI" id="CHEBI:37563"/>
        <note>allosteric inhibitor</note>
    </ligand>
</feature>
<feature type="binding site" evidence="1">
    <location>
        <position position="18"/>
    </location>
    <ligand>
        <name>UTP</name>
        <dbReference type="ChEBI" id="CHEBI:46398"/>
    </ligand>
</feature>
<feature type="binding site" evidence="1">
    <location>
        <begin position="19"/>
        <end position="24"/>
    </location>
    <ligand>
        <name>ATP</name>
        <dbReference type="ChEBI" id="CHEBI:30616"/>
    </ligand>
</feature>
<feature type="binding site" evidence="1">
    <location>
        <position position="76"/>
    </location>
    <ligand>
        <name>ATP</name>
        <dbReference type="ChEBI" id="CHEBI:30616"/>
    </ligand>
</feature>
<feature type="binding site" evidence="1">
    <location>
        <position position="76"/>
    </location>
    <ligand>
        <name>Mg(2+)</name>
        <dbReference type="ChEBI" id="CHEBI:18420"/>
    </ligand>
</feature>
<feature type="binding site" evidence="1">
    <location>
        <position position="145"/>
    </location>
    <ligand>
        <name>Mg(2+)</name>
        <dbReference type="ChEBI" id="CHEBI:18420"/>
    </ligand>
</feature>
<feature type="binding site" evidence="1">
    <location>
        <begin position="152"/>
        <end position="154"/>
    </location>
    <ligand>
        <name>CTP</name>
        <dbReference type="ChEBI" id="CHEBI:37563"/>
        <note>allosteric inhibitor</note>
    </ligand>
</feature>
<feature type="binding site" evidence="1">
    <location>
        <begin position="192"/>
        <end position="197"/>
    </location>
    <ligand>
        <name>CTP</name>
        <dbReference type="ChEBI" id="CHEBI:37563"/>
        <note>allosteric inhibitor</note>
    </ligand>
</feature>
<feature type="binding site" evidence="1">
    <location>
        <begin position="192"/>
        <end position="197"/>
    </location>
    <ligand>
        <name>UTP</name>
        <dbReference type="ChEBI" id="CHEBI:46398"/>
    </ligand>
</feature>
<feature type="binding site" evidence="1">
    <location>
        <position position="228"/>
    </location>
    <ligand>
        <name>CTP</name>
        <dbReference type="ChEBI" id="CHEBI:37563"/>
        <note>allosteric inhibitor</note>
    </ligand>
</feature>
<feature type="binding site" evidence="1">
    <location>
        <position position="228"/>
    </location>
    <ligand>
        <name>UTP</name>
        <dbReference type="ChEBI" id="CHEBI:46398"/>
    </ligand>
</feature>
<feature type="binding site" evidence="1">
    <location>
        <position position="359"/>
    </location>
    <ligand>
        <name>L-glutamine</name>
        <dbReference type="ChEBI" id="CHEBI:58359"/>
    </ligand>
</feature>
<feature type="binding site" evidence="1">
    <location>
        <begin position="387"/>
        <end position="390"/>
    </location>
    <ligand>
        <name>L-glutamine</name>
        <dbReference type="ChEBI" id="CHEBI:58359"/>
    </ligand>
</feature>
<feature type="binding site" evidence="1">
    <location>
        <position position="410"/>
    </location>
    <ligand>
        <name>L-glutamine</name>
        <dbReference type="ChEBI" id="CHEBI:58359"/>
    </ligand>
</feature>
<feature type="binding site" evidence="1">
    <location>
        <position position="472"/>
    </location>
    <ligand>
        <name>L-glutamine</name>
        <dbReference type="ChEBI" id="CHEBI:58359"/>
    </ligand>
</feature>
<gene>
    <name evidence="1" type="primary">pyrG</name>
    <name type="ordered locus">Tfu_1199</name>
</gene>
<accession>Q47QN2</accession>
<proteinExistence type="inferred from homology"/>
<comment type="function">
    <text evidence="1">Catalyzes the ATP-dependent amination of UTP to CTP with either L-glutamine or ammonia as the source of nitrogen. Regulates intracellular CTP levels through interactions with the four ribonucleotide triphosphates.</text>
</comment>
<comment type="catalytic activity">
    <reaction evidence="1">
        <text>UTP + L-glutamine + ATP + H2O = CTP + L-glutamate + ADP + phosphate + 2 H(+)</text>
        <dbReference type="Rhea" id="RHEA:26426"/>
        <dbReference type="ChEBI" id="CHEBI:15377"/>
        <dbReference type="ChEBI" id="CHEBI:15378"/>
        <dbReference type="ChEBI" id="CHEBI:29985"/>
        <dbReference type="ChEBI" id="CHEBI:30616"/>
        <dbReference type="ChEBI" id="CHEBI:37563"/>
        <dbReference type="ChEBI" id="CHEBI:43474"/>
        <dbReference type="ChEBI" id="CHEBI:46398"/>
        <dbReference type="ChEBI" id="CHEBI:58359"/>
        <dbReference type="ChEBI" id="CHEBI:456216"/>
        <dbReference type="EC" id="6.3.4.2"/>
    </reaction>
</comment>
<comment type="catalytic activity">
    <reaction evidence="1">
        <text>L-glutamine + H2O = L-glutamate + NH4(+)</text>
        <dbReference type="Rhea" id="RHEA:15889"/>
        <dbReference type="ChEBI" id="CHEBI:15377"/>
        <dbReference type="ChEBI" id="CHEBI:28938"/>
        <dbReference type="ChEBI" id="CHEBI:29985"/>
        <dbReference type="ChEBI" id="CHEBI:58359"/>
    </reaction>
</comment>
<comment type="catalytic activity">
    <reaction evidence="1">
        <text>UTP + NH4(+) + ATP = CTP + ADP + phosphate + 2 H(+)</text>
        <dbReference type="Rhea" id="RHEA:16597"/>
        <dbReference type="ChEBI" id="CHEBI:15378"/>
        <dbReference type="ChEBI" id="CHEBI:28938"/>
        <dbReference type="ChEBI" id="CHEBI:30616"/>
        <dbReference type="ChEBI" id="CHEBI:37563"/>
        <dbReference type="ChEBI" id="CHEBI:43474"/>
        <dbReference type="ChEBI" id="CHEBI:46398"/>
        <dbReference type="ChEBI" id="CHEBI:456216"/>
    </reaction>
</comment>
<comment type="activity regulation">
    <text evidence="1">Allosterically activated by GTP, when glutamine is the substrate; GTP has no effect on the reaction when ammonia is the substrate. The allosteric effector GTP functions by stabilizing the protein conformation that binds the tetrahedral intermediate(s) formed during glutamine hydrolysis. Inhibited by the product CTP, via allosteric rather than competitive inhibition.</text>
</comment>
<comment type="pathway">
    <text evidence="1">Pyrimidine metabolism; CTP biosynthesis via de novo pathway; CTP from UDP: step 2/2.</text>
</comment>
<comment type="subunit">
    <text evidence="1">Homotetramer.</text>
</comment>
<comment type="miscellaneous">
    <text evidence="1">CTPSs have evolved a hybrid strategy for distinguishing between UTP and CTP. The overlapping regions of the product feedback inhibitory and substrate sites recognize a common feature in both compounds, the triphosphate moiety. To differentiate isosteric substrate and product pyrimidine rings, an additional pocket far from the expected kinase/ligase catalytic site, specifically recognizes the cytosine and ribose portions of the product inhibitor.</text>
</comment>
<comment type="similarity">
    <text evidence="1">Belongs to the CTP synthase family.</text>
</comment>
<comment type="sequence caution" evidence="2">
    <conflict type="erroneous initiation">
        <sequence resource="EMBL-CDS" id="AAZ55237"/>
    </conflict>
</comment>
<sequence>MASAASSKHLFVTGGVASSLGKGLTASSLGRLLKSRGLRVTMQKLDPYLNVDPGTMNPFQHGEVFVTDDGAETDLDIGHYERFLDTELSASANVTTGQIYSSVIAKERQGAYLGDTVQVIPHITNEIKARILAMDSEDVDVVITEIGGTVGDIESQPFLEAARQIRHEIGRDNCFFLHISLLPYLAPAGELKTKPTQHSVAALRSIGIQPDAIVCRADRPIPTSLKQKISLMCDVEEGGVVACPDAPSIYDIPKVLHREGLDAFVVRRLGLAFRDVDWTEWNDVLDRVHNPEHEVTIALVGKYVDLPDAYLSVTEALRAGGFAHRTRVNIRWVASDNCTTPEGAQRELDGVHGVLIPGGFGVRGIEGKVGAIRHARENGIPLLGICLGLQCMVIEYARDVAGLRGANSLEFDDKAEHPVVSTMADQTDVVAGERDMGGTMRLGLYPARLRENTLVRELYGGAEEVSERHRHRYEVSNAYRPVLEEAGLVISGVSPDGSLVEYVELPQDKHPFFLGTQAHPELRSRPTRPHPLFVGFIEAALKYSAGTGIADG</sequence>